<reference key="1">
    <citation type="journal article" date="2006" name="Nat. Biotechnol.">
        <title>Complete genome sequence of the entomopathogenic and metabolically versatile soil bacterium Pseudomonas entomophila.</title>
        <authorList>
            <person name="Vodovar N."/>
            <person name="Vallenet D."/>
            <person name="Cruveiller S."/>
            <person name="Rouy Z."/>
            <person name="Barbe V."/>
            <person name="Acosta C."/>
            <person name="Cattolico L."/>
            <person name="Jubin C."/>
            <person name="Lajus A."/>
            <person name="Segurens B."/>
            <person name="Vacherie B."/>
            <person name="Wincker P."/>
            <person name="Weissenbach J."/>
            <person name="Lemaitre B."/>
            <person name="Medigue C."/>
            <person name="Boccard F."/>
        </authorList>
    </citation>
    <scope>NUCLEOTIDE SEQUENCE [LARGE SCALE GENOMIC DNA]</scope>
    <source>
        <strain>L48</strain>
    </source>
</reference>
<keyword id="KW-0030">Aminoacyl-tRNA synthetase</keyword>
<keyword id="KW-0067">ATP-binding</keyword>
<keyword id="KW-0436">Ligase</keyword>
<keyword id="KW-0479">Metal-binding</keyword>
<keyword id="KW-0547">Nucleotide-binding</keyword>
<keyword id="KW-0862">Zinc</keyword>
<accession>Q1I4P8</accession>
<proteinExistence type="inferred from homology"/>
<protein>
    <recommendedName>
        <fullName evidence="1">Glutamyl-Q tRNA(Asp) synthetase</fullName>
        <shortName evidence="1">Glu-Q-RSs</shortName>
        <ecNumber evidence="1">6.1.1.-</ecNumber>
    </recommendedName>
</protein>
<dbReference type="EC" id="6.1.1.-" evidence="1"/>
<dbReference type="EMBL" id="CT573326">
    <property type="protein sequence ID" value="CAK17388.1"/>
    <property type="molecule type" value="Genomic_DNA"/>
</dbReference>
<dbReference type="RefSeq" id="WP_011535751.1">
    <property type="nucleotide sequence ID" value="NC_008027.1"/>
</dbReference>
<dbReference type="SMR" id="Q1I4P8"/>
<dbReference type="STRING" id="384676.PSEEN4727"/>
<dbReference type="GeneID" id="32807694"/>
<dbReference type="KEGG" id="pen:PSEEN4727"/>
<dbReference type="eggNOG" id="COG0008">
    <property type="taxonomic scope" value="Bacteria"/>
</dbReference>
<dbReference type="HOGENOM" id="CLU_015768_0_1_6"/>
<dbReference type="OrthoDB" id="9807503at2"/>
<dbReference type="Proteomes" id="UP000000658">
    <property type="component" value="Chromosome"/>
</dbReference>
<dbReference type="GO" id="GO:0005829">
    <property type="term" value="C:cytosol"/>
    <property type="evidence" value="ECO:0007669"/>
    <property type="project" value="TreeGrafter"/>
</dbReference>
<dbReference type="GO" id="GO:0005524">
    <property type="term" value="F:ATP binding"/>
    <property type="evidence" value="ECO:0007669"/>
    <property type="project" value="UniProtKB-KW"/>
</dbReference>
<dbReference type="GO" id="GO:0004818">
    <property type="term" value="F:glutamate-tRNA ligase activity"/>
    <property type="evidence" value="ECO:0007669"/>
    <property type="project" value="TreeGrafter"/>
</dbReference>
<dbReference type="GO" id="GO:0008270">
    <property type="term" value="F:zinc ion binding"/>
    <property type="evidence" value="ECO:0007669"/>
    <property type="project" value="UniProtKB-UniRule"/>
</dbReference>
<dbReference type="GO" id="GO:0006424">
    <property type="term" value="P:glutamyl-tRNA aminoacylation"/>
    <property type="evidence" value="ECO:0007669"/>
    <property type="project" value="InterPro"/>
</dbReference>
<dbReference type="GO" id="GO:0006400">
    <property type="term" value="P:tRNA modification"/>
    <property type="evidence" value="ECO:0007669"/>
    <property type="project" value="InterPro"/>
</dbReference>
<dbReference type="FunFam" id="3.40.50.620:FF:000093">
    <property type="entry name" value="Glutamyl-Q tRNA(Asp) synthetase"/>
    <property type="match status" value="1"/>
</dbReference>
<dbReference type="Gene3D" id="3.90.800.10">
    <property type="entry name" value="Glutamyl-tRNA Synthetase, Domain 3"/>
    <property type="match status" value="1"/>
</dbReference>
<dbReference type="Gene3D" id="3.40.50.620">
    <property type="entry name" value="HUPs"/>
    <property type="match status" value="1"/>
</dbReference>
<dbReference type="HAMAP" id="MF_01428">
    <property type="entry name" value="Glu_Q_tRNA_synth"/>
    <property type="match status" value="1"/>
</dbReference>
<dbReference type="InterPro" id="IPR022380">
    <property type="entry name" value="Glu-Q_tRNA(Asp)_Synthase"/>
</dbReference>
<dbReference type="InterPro" id="IPR000924">
    <property type="entry name" value="Glu/Gln-tRNA-synth"/>
</dbReference>
<dbReference type="InterPro" id="IPR020058">
    <property type="entry name" value="Glu/Gln-tRNA-synth_Ib_cat-dom"/>
</dbReference>
<dbReference type="InterPro" id="IPR049940">
    <property type="entry name" value="GluQ/Sye"/>
</dbReference>
<dbReference type="InterPro" id="IPR014729">
    <property type="entry name" value="Rossmann-like_a/b/a_fold"/>
</dbReference>
<dbReference type="NCBIfam" id="NF004314">
    <property type="entry name" value="PRK05710.1-3"/>
    <property type="match status" value="1"/>
</dbReference>
<dbReference type="NCBIfam" id="TIGR03838">
    <property type="entry name" value="queuosine_YadB"/>
    <property type="match status" value="1"/>
</dbReference>
<dbReference type="PANTHER" id="PTHR43311">
    <property type="entry name" value="GLUTAMATE--TRNA LIGASE"/>
    <property type="match status" value="1"/>
</dbReference>
<dbReference type="PANTHER" id="PTHR43311:SF1">
    <property type="entry name" value="GLUTAMYL-Q TRNA(ASP) SYNTHETASE"/>
    <property type="match status" value="1"/>
</dbReference>
<dbReference type="Pfam" id="PF00749">
    <property type="entry name" value="tRNA-synt_1c"/>
    <property type="match status" value="2"/>
</dbReference>
<dbReference type="PRINTS" id="PR00987">
    <property type="entry name" value="TRNASYNTHGLU"/>
</dbReference>
<dbReference type="SUPFAM" id="SSF52374">
    <property type="entry name" value="Nucleotidylyl transferase"/>
    <property type="match status" value="1"/>
</dbReference>
<name>GLUQ_PSEE4</name>
<comment type="function">
    <text evidence="1">Catalyzes the tRNA-independent activation of glutamate in presence of ATP and the subsequent transfer of glutamate onto a tRNA(Asp). Glutamate is transferred on the 2-amino-5-(4,5-dihydroxy-2-cyclopenten-1-yl) moiety of the queuosine in the wobble position of the QUC anticodon.</text>
</comment>
<comment type="cofactor">
    <cofactor evidence="1">
        <name>Zn(2+)</name>
        <dbReference type="ChEBI" id="CHEBI:29105"/>
    </cofactor>
    <text evidence="1">Binds 1 zinc ion per subunit.</text>
</comment>
<comment type="similarity">
    <text evidence="1">Belongs to the class-I aminoacyl-tRNA synthetase family. GluQ subfamily.</text>
</comment>
<sequence length="295" mass="33086">MNDSRYIGRFAPTPSGFLHFGSLVAALASWLDARAVNGRWLLRMEDTDPPREMPGARDAILQTLERYGLEWDGEVVFQSQRHEAYAAVVDRLFNMGLAYACTCSRKQLEGYDGIYPGFCRNAGHAREGAAIRLRVPELIYRFSDRVQGAFEQHLGREVGDFVIQRRDGLYAYQLAVVLDDAWQGVTDIVRGADLLDNTPRQLYLQELLGFSQPRYLHIPLIVQPDGHKLGKSYRSPPLEADQATPLLLRALRALGQQADPALIGASPAEVLAVARQQWQPDNIARQMTVPEADLR</sequence>
<evidence type="ECO:0000255" key="1">
    <source>
        <dbReference type="HAMAP-Rule" id="MF_01428"/>
    </source>
</evidence>
<organism>
    <name type="scientific">Pseudomonas entomophila (strain L48)</name>
    <dbReference type="NCBI Taxonomy" id="384676"/>
    <lineage>
        <taxon>Bacteria</taxon>
        <taxon>Pseudomonadati</taxon>
        <taxon>Pseudomonadota</taxon>
        <taxon>Gammaproteobacteria</taxon>
        <taxon>Pseudomonadales</taxon>
        <taxon>Pseudomonadaceae</taxon>
        <taxon>Pseudomonas</taxon>
    </lineage>
</organism>
<gene>
    <name evidence="1" type="primary">gluQ</name>
    <name type="ordered locus">PSEEN4727</name>
</gene>
<feature type="chain" id="PRO_1000145745" description="Glutamyl-Q tRNA(Asp) synthetase">
    <location>
        <begin position="1"/>
        <end position="295"/>
    </location>
</feature>
<feature type="short sequence motif" description="'HIGH' region">
    <location>
        <begin position="12"/>
        <end position="22"/>
    </location>
</feature>
<feature type="short sequence motif" description="'KMSKS' region">
    <location>
        <begin position="228"/>
        <end position="232"/>
    </location>
</feature>
<feature type="binding site" evidence="1">
    <location>
        <begin position="9"/>
        <end position="13"/>
    </location>
    <ligand>
        <name>L-glutamate</name>
        <dbReference type="ChEBI" id="CHEBI:29985"/>
    </ligand>
</feature>
<feature type="binding site" evidence="1">
    <location>
        <position position="45"/>
    </location>
    <ligand>
        <name>L-glutamate</name>
        <dbReference type="ChEBI" id="CHEBI:29985"/>
    </ligand>
</feature>
<feature type="binding site" evidence="1">
    <location>
        <position position="101"/>
    </location>
    <ligand>
        <name>Zn(2+)</name>
        <dbReference type="ChEBI" id="CHEBI:29105"/>
    </ligand>
</feature>
<feature type="binding site" evidence="1">
    <location>
        <position position="103"/>
    </location>
    <ligand>
        <name>Zn(2+)</name>
        <dbReference type="ChEBI" id="CHEBI:29105"/>
    </ligand>
</feature>
<feature type="binding site" evidence="1">
    <location>
        <position position="115"/>
    </location>
    <ligand>
        <name>Zn(2+)</name>
        <dbReference type="ChEBI" id="CHEBI:29105"/>
    </ligand>
</feature>
<feature type="binding site" evidence="1">
    <location>
        <position position="119"/>
    </location>
    <ligand>
        <name>Zn(2+)</name>
        <dbReference type="ChEBI" id="CHEBI:29105"/>
    </ligand>
</feature>
<feature type="binding site" evidence="1">
    <location>
        <position position="172"/>
    </location>
    <ligand>
        <name>L-glutamate</name>
        <dbReference type="ChEBI" id="CHEBI:29985"/>
    </ligand>
</feature>
<feature type="binding site" evidence="1">
    <location>
        <position position="190"/>
    </location>
    <ligand>
        <name>L-glutamate</name>
        <dbReference type="ChEBI" id="CHEBI:29985"/>
    </ligand>
</feature>
<feature type="binding site" evidence="1">
    <location>
        <position position="231"/>
    </location>
    <ligand>
        <name>ATP</name>
        <dbReference type="ChEBI" id="CHEBI:30616"/>
    </ligand>
</feature>